<reference key="1">
    <citation type="submission" date="2006-01" db="EMBL/GenBank/DDBJ databases">
        <title>Complete sequence of Anaeromyxobacter dehalogenans 2CP-C.</title>
        <authorList>
            <person name="Copeland A."/>
            <person name="Lucas S."/>
            <person name="Lapidus A."/>
            <person name="Barry K."/>
            <person name="Detter J.C."/>
            <person name="Glavina T."/>
            <person name="Hammon N."/>
            <person name="Israni S."/>
            <person name="Pitluck S."/>
            <person name="Brettin T."/>
            <person name="Bruce D."/>
            <person name="Han C."/>
            <person name="Tapia R."/>
            <person name="Gilna P."/>
            <person name="Kiss H."/>
            <person name="Schmutz J."/>
            <person name="Larimer F."/>
            <person name="Land M."/>
            <person name="Kyrpides N."/>
            <person name="Anderson I."/>
            <person name="Sanford R.A."/>
            <person name="Ritalahti K.M."/>
            <person name="Thomas H.S."/>
            <person name="Kirby J.R."/>
            <person name="Zhulin I.B."/>
            <person name="Loeffler F.E."/>
            <person name="Richardson P."/>
        </authorList>
    </citation>
    <scope>NUCLEOTIDE SEQUENCE [LARGE SCALE GENOMIC DNA]</scope>
    <source>
        <strain>2CP-C</strain>
    </source>
</reference>
<keyword id="KW-0378">Hydrolase</keyword>
<keyword id="KW-0460">Magnesium</keyword>
<keyword id="KW-0479">Metal-binding</keyword>
<keyword id="KW-0546">Nucleotide metabolism</keyword>
<keyword id="KW-0547">Nucleotide-binding</keyword>
<keyword id="KW-1185">Reference proteome</keyword>
<gene>
    <name type="ordered locus">Adeh_3360</name>
</gene>
<comment type="function">
    <text evidence="1">Pyrophosphatase that catalyzes the hydrolysis of nucleoside triphosphates to their monophosphate derivatives, with a high preference for the non-canonical purine nucleotides XTP (xanthosine triphosphate), dITP (deoxyinosine triphosphate) and ITP. Seems to function as a house-cleaning enzyme that removes non-canonical purine nucleotides from the nucleotide pool, thus preventing their incorporation into DNA/RNA and avoiding chromosomal lesions.</text>
</comment>
<comment type="catalytic activity">
    <reaction evidence="1">
        <text>XTP + H2O = XMP + diphosphate + H(+)</text>
        <dbReference type="Rhea" id="RHEA:28610"/>
        <dbReference type="ChEBI" id="CHEBI:15377"/>
        <dbReference type="ChEBI" id="CHEBI:15378"/>
        <dbReference type="ChEBI" id="CHEBI:33019"/>
        <dbReference type="ChEBI" id="CHEBI:57464"/>
        <dbReference type="ChEBI" id="CHEBI:61314"/>
        <dbReference type="EC" id="3.6.1.66"/>
    </reaction>
</comment>
<comment type="catalytic activity">
    <reaction evidence="1">
        <text>dITP + H2O = dIMP + diphosphate + H(+)</text>
        <dbReference type="Rhea" id="RHEA:28342"/>
        <dbReference type="ChEBI" id="CHEBI:15377"/>
        <dbReference type="ChEBI" id="CHEBI:15378"/>
        <dbReference type="ChEBI" id="CHEBI:33019"/>
        <dbReference type="ChEBI" id="CHEBI:61194"/>
        <dbReference type="ChEBI" id="CHEBI:61382"/>
        <dbReference type="EC" id="3.6.1.66"/>
    </reaction>
</comment>
<comment type="catalytic activity">
    <reaction evidence="1">
        <text>ITP + H2O = IMP + diphosphate + H(+)</text>
        <dbReference type="Rhea" id="RHEA:29399"/>
        <dbReference type="ChEBI" id="CHEBI:15377"/>
        <dbReference type="ChEBI" id="CHEBI:15378"/>
        <dbReference type="ChEBI" id="CHEBI:33019"/>
        <dbReference type="ChEBI" id="CHEBI:58053"/>
        <dbReference type="ChEBI" id="CHEBI:61402"/>
        <dbReference type="EC" id="3.6.1.66"/>
    </reaction>
</comment>
<comment type="cofactor">
    <cofactor evidence="1">
        <name>Mg(2+)</name>
        <dbReference type="ChEBI" id="CHEBI:18420"/>
    </cofactor>
    <text evidence="1">Binds 1 Mg(2+) ion per subunit.</text>
</comment>
<comment type="subunit">
    <text evidence="1">Homodimer.</text>
</comment>
<comment type="similarity">
    <text evidence="1">Belongs to the HAM1 NTPase family.</text>
</comment>
<organism>
    <name type="scientific">Anaeromyxobacter dehalogenans (strain 2CP-C)</name>
    <dbReference type="NCBI Taxonomy" id="290397"/>
    <lineage>
        <taxon>Bacteria</taxon>
        <taxon>Pseudomonadati</taxon>
        <taxon>Myxococcota</taxon>
        <taxon>Myxococcia</taxon>
        <taxon>Myxococcales</taxon>
        <taxon>Cystobacterineae</taxon>
        <taxon>Anaeromyxobacteraceae</taxon>
        <taxon>Anaeromyxobacter</taxon>
    </lineage>
</organism>
<proteinExistence type="inferred from homology"/>
<name>IXTPA_ANADE</name>
<evidence type="ECO:0000255" key="1">
    <source>
        <dbReference type="HAMAP-Rule" id="MF_01405"/>
    </source>
</evidence>
<protein>
    <recommendedName>
        <fullName evidence="1">dITP/XTP pyrophosphatase</fullName>
        <ecNumber evidence="1">3.6.1.66</ecNumber>
    </recommendedName>
    <alternativeName>
        <fullName evidence="1">Non-canonical purine NTP pyrophosphatase</fullName>
    </alternativeName>
    <alternativeName>
        <fullName evidence="1">Non-standard purine NTP pyrophosphatase</fullName>
    </alternativeName>
    <alternativeName>
        <fullName evidence="1">Nucleoside-triphosphate diphosphatase</fullName>
    </alternativeName>
    <alternativeName>
        <fullName evidence="1">Nucleoside-triphosphate pyrophosphatase</fullName>
        <shortName evidence="1">NTPase</shortName>
    </alternativeName>
</protein>
<feature type="chain" id="PRO_1000068407" description="dITP/XTP pyrophosphatase">
    <location>
        <begin position="1"/>
        <end position="235"/>
    </location>
</feature>
<feature type="active site" description="Proton acceptor" evidence="1">
    <location>
        <position position="70"/>
    </location>
</feature>
<feature type="binding site" evidence="1">
    <location>
        <begin position="7"/>
        <end position="12"/>
    </location>
    <ligand>
        <name>substrate</name>
    </ligand>
</feature>
<feature type="binding site" evidence="1">
    <location>
        <position position="70"/>
    </location>
    <ligand>
        <name>Mg(2+)</name>
        <dbReference type="ChEBI" id="CHEBI:18420"/>
    </ligand>
</feature>
<feature type="binding site" evidence="1">
    <location>
        <position position="71"/>
    </location>
    <ligand>
        <name>substrate</name>
    </ligand>
</feature>
<feature type="binding site" evidence="1">
    <location>
        <begin position="180"/>
        <end position="183"/>
    </location>
    <ligand>
        <name>substrate</name>
    </ligand>
</feature>
<feature type="binding site" evidence="1">
    <location>
        <position position="211"/>
    </location>
    <ligand>
        <name>substrate</name>
    </ligand>
</feature>
<feature type="binding site" evidence="1">
    <location>
        <begin position="216"/>
        <end position="217"/>
    </location>
    <ligand>
        <name>substrate</name>
    </ligand>
</feature>
<accession>Q2IEX2</accession>
<sequence length="235" mass="24465">MDLLFGSTNPGKLRELRRLVAGLPLRVVSPDDLGRPLPVVVEDGATFQANAEKKAVAWARWSGLHAVADDSGLCVDALGGAPGVHSARWSDLEPEGPASPVCELAGVAELELGPVAGRAARDERNNDKLLAALSGLPDPRRGARYEAVLALARPDGTLVGTVTGTCPGRIGHARRGDGGFGYDPLFVPAAELAAGEGARVRTMAELSSDEKDALSHRGEAFRKLLPMLAALARGA</sequence>
<dbReference type="EC" id="3.6.1.66" evidence="1"/>
<dbReference type="EMBL" id="CP000251">
    <property type="protein sequence ID" value="ABC83127.1"/>
    <property type="molecule type" value="Genomic_DNA"/>
</dbReference>
<dbReference type="RefSeq" id="WP_011422409.1">
    <property type="nucleotide sequence ID" value="NC_007760.1"/>
</dbReference>
<dbReference type="SMR" id="Q2IEX2"/>
<dbReference type="STRING" id="290397.Adeh_3360"/>
<dbReference type="KEGG" id="ade:Adeh_3360"/>
<dbReference type="eggNOG" id="COG0127">
    <property type="taxonomic scope" value="Bacteria"/>
</dbReference>
<dbReference type="HOGENOM" id="CLU_082080_0_2_7"/>
<dbReference type="Proteomes" id="UP000001935">
    <property type="component" value="Chromosome"/>
</dbReference>
<dbReference type="GO" id="GO:0005829">
    <property type="term" value="C:cytosol"/>
    <property type="evidence" value="ECO:0007669"/>
    <property type="project" value="TreeGrafter"/>
</dbReference>
<dbReference type="GO" id="GO:0035870">
    <property type="term" value="F:dITP diphosphatase activity"/>
    <property type="evidence" value="ECO:0007669"/>
    <property type="project" value="RHEA"/>
</dbReference>
<dbReference type="GO" id="GO:0036220">
    <property type="term" value="F:ITP diphosphatase activity"/>
    <property type="evidence" value="ECO:0007669"/>
    <property type="project" value="UniProtKB-EC"/>
</dbReference>
<dbReference type="GO" id="GO:0046872">
    <property type="term" value="F:metal ion binding"/>
    <property type="evidence" value="ECO:0007669"/>
    <property type="project" value="UniProtKB-KW"/>
</dbReference>
<dbReference type="GO" id="GO:0000166">
    <property type="term" value="F:nucleotide binding"/>
    <property type="evidence" value="ECO:0007669"/>
    <property type="project" value="UniProtKB-KW"/>
</dbReference>
<dbReference type="GO" id="GO:0017111">
    <property type="term" value="F:ribonucleoside triphosphate phosphatase activity"/>
    <property type="evidence" value="ECO:0007669"/>
    <property type="project" value="InterPro"/>
</dbReference>
<dbReference type="GO" id="GO:0036222">
    <property type="term" value="F:XTP diphosphatase activity"/>
    <property type="evidence" value="ECO:0007669"/>
    <property type="project" value="RHEA"/>
</dbReference>
<dbReference type="GO" id="GO:0009117">
    <property type="term" value="P:nucleotide metabolic process"/>
    <property type="evidence" value="ECO:0007669"/>
    <property type="project" value="UniProtKB-KW"/>
</dbReference>
<dbReference type="GO" id="GO:0009146">
    <property type="term" value="P:purine nucleoside triphosphate catabolic process"/>
    <property type="evidence" value="ECO:0007669"/>
    <property type="project" value="UniProtKB-UniRule"/>
</dbReference>
<dbReference type="CDD" id="cd00515">
    <property type="entry name" value="HAM1"/>
    <property type="match status" value="1"/>
</dbReference>
<dbReference type="FunFam" id="3.90.950.10:FF:000001">
    <property type="entry name" value="dITP/XTP pyrophosphatase"/>
    <property type="match status" value="1"/>
</dbReference>
<dbReference type="Gene3D" id="3.90.950.10">
    <property type="match status" value="1"/>
</dbReference>
<dbReference type="HAMAP" id="MF_01405">
    <property type="entry name" value="Non_canon_purine_NTPase"/>
    <property type="match status" value="1"/>
</dbReference>
<dbReference type="InterPro" id="IPR020922">
    <property type="entry name" value="dITP/XTP_pyrophosphatase"/>
</dbReference>
<dbReference type="InterPro" id="IPR029001">
    <property type="entry name" value="ITPase-like_fam"/>
</dbReference>
<dbReference type="InterPro" id="IPR002637">
    <property type="entry name" value="RdgB/HAM1"/>
</dbReference>
<dbReference type="PANTHER" id="PTHR11067:SF9">
    <property type="entry name" value="INOSINE TRIPHOSPHATE PYROPHOSPHATASE"/>
    <property type="match status" value="1"/>
</dbReference>
<dbReference type="PANTHER" id="PTHR11067">
    <property type="entry name" value="INOSINE TRIPHOSPHATE PYROPHOSPHATASE/HAM1 PROTEIN"/>
    <property type="match status" value="1"/>
</dbReference>
<dbReference type="Pfam" id="PF01725">
    <property type="entry name" value="Ham1p_like"/>
    <property type="match status" value="2"/>
</dbReference>
<dbReference type="SUPFAM" id="SSF52972">
    <property type="entry name" value="ITPase-like"/>
    <property type="match status" value="1"/>
</dbReference>